<feature type="chain" id="PRO_0000324772" description="GTPase-activating protein and VPS9 domain-containing protein 1">
    <location>
        <begin position="1"/>
        <end position="1458"/>
    </location>
</feature>
<feature type="domain" description="Ras-GAP" evidence="3">
    <location>
        <begin position="147"/>
        <end position="385"/>
    </location>
</feature>
<feature type="domain" description="VPS9" evidence="4">
    <location>
        <begin position="1318"/>
        <end position="1458"/>
    </location>
</feature>
<feature type="region of interest" description="Disordered" evidence="5">
    <location>
        <begin position="447"/>
        <end position="475"/>
    </location>
</feature>
<feature type="region of interest" description="Disordered" evidence="5">
    <location>
        <begin position="574"/>
        <end position="608"/>
    </location>
</feature>
<feature type="region of interest" description="Disordered" evidence="5">
    <location>
        <begin position="738"/>
        <end position="821"/>
    </location>
</feature>
<feature type="region of interest" description="Disordered" evidence="5">
    <location>
        <begin position="846"/>
        <end position="867"/>
    </location>
</feature>
<feature type="region of interest" description="Disordered" evidence="5">
    <location>
        <begin position="888"/>
        <end position="1022"/>
    </location>
</feature>
<feature type="region of interest" description="Disordered" evidence="5">
    <location>
        <begin position="1039"/>
        <end position="1072"/>
    </location>
</feature>
<feature type="compositionally biased region" description="Polar residues" evidence="5">
    <location>
        <begin position="451"/>
        <end position="473"/>
    </location>
</feature>
<feature type="compositionally biased region" description="Polar residues" evidence="5">
    <location>
        <begin position="578"/>
        <end position="588"/>
    </location>
</feature>
<feature type="compositionally biased region" description="Polar residues" evidence="5">
    <location>
        <begin position="758"/>
        <end position="777"/>
    </location>
</feature>
<feature type="compositionally biased region" description="Basic and acidic residues" evidence="5">
    <location>
        <begin position="778"/>
        <end position="789"/>
    </location>
</feature>
<feature type="compositionally biased region" description="Basic and acidic residues" evidence="5">
    <location>
        <begin position="888"/>
        <end position="902"/>
    </location>
</feature>
<feature type="compositionally biased region" description="Low complexity" evidence="5">
    <location>
        <begin position="930"/>
        <end position="951"/>
    </location>
</feature>
<feature type="compositionally biased region" description="Basic and acidic residues" evidence="5">
    <location>
        <begin position="952"/>
        <end position="973"/>
    </location>
</feature>
<feature type="compositionally biased region" description="Basic and acidic residues" evidence="5">
    <location>
        <begin position="995"/>
        <end position="1006"/>
    </location>
</feature>
<feature type="compositionally biased region" description="Polar residues" evidence="5">
    <location>
        <begin position="1010"/>
        <end position="1022"/>
    </location>
</feature>
<feature type="compositionally biased region" description="Basic and acidic residues" evidence="5">
    <location>
        <begin position="1061"/>
        <end position="1071"/>
    </location>
</feature>
<feature type="site" description="Arginine finger; crucial for GTP hydrolysis by stabilizing the transition state" evidence="3">
    <location>
        <position position="172"/>
    </location>
</feature>
<feature type="modified residue" description="Phosphoserine" evidence="2">
    <location>
        <position position="227"/>
    </location>
</feature>
<feature type="modified residue" description="Phosphothreonine" evidence="2">
    <location>
        <position position="390"/>
    </location>
</feature>
<feature type="modified residue" description="Phosphothreonine" evidence="2">
    <location>
        <position position="458"/>
    </location>
</feature>
<feature type="modified residue" description="Phosphotyrosine" evidence="2">
    <location>
        <position position="460"/>
    </location>
</feature>
<feature type="modified residue" description="Phosphoserine" evidence="2">
    <location>
        <position position="466"/>
    </location>
</feature>
<feature type="modified residue" description="Phosphothreonine" evidence="2">
    <location>
        <position position="470"/>
    </location>
</feature>
<feature type="modified residue" description="Phosphoserine" evidence="16">
    <location>
        <position position="566"/>
    </location>
</feature>
<feature type="modified residue" description="Phosphoserine" evidence="16">
    <location>
        <position position="569"/>
    </location>
</feature>
<feature type="modified residue" description="Phosphoserine" evidence="16">
    <location>
        <position position="742"/>
    </location>
</feature>
<feature type="modified residue" description="Phosphoserine" evidence="2">
    <location>
        <position position="746"/>
    </location>
</feature>
<feature type="modified residue" description="Phosphoserine" evidence="16">
    <location>
        <position position="757"/>
    </location>
</feature>
<feature type="modified residue" description="Phosphothreonine" evidence="2">
    <location>
        <position position="762"/>
    </location>
</feature>
<feature type="modified residue" description="Phosphoserine" evidence="2">
    <location>
        <position position="766"/>
    </location>
</feature>
<feature type="modified residue" description="Phosphoserine" evidence="2">
    <location>
        <position position="876"/>
    </location>
</feature>
<feature type="modified residue" description="Phosphoserine" evidence="14 15 16">
    <location>
        <position position="902"/>
    </location>
</feature>
<feature type="modified residue" description="Phosphoserine" evidence="2">
    <location>
        <position position="903"/>
    </location>
</feature>
<feature type="modified residue" description="Phosphoserine" evidence="16">
    <location>
        <position position="908"/>
    </location>
</feature>
<feature type="modified residue" description="Phosphoserine" evidence="2">
    <location>
        <position position="914"/>
    </location>
</feature>
<feature type="modified residue" description="Phosphoserine" evidence="2">
    <location>
        <position position="964"/>
    </location>
</feature>
<feature type="modified residue" description="Phosphoserine" evidence="2">
    <location>
        <position position="1017"/>
    </location>
</feature>
<feature type="modified residue" description="Phosphoserine" evidence="16">
    <location>
        <position position="1044"/>
    </location>
</feature>
<feature type="modified residue" description="Phosphoserine" evidence="2">
    <location>
        <position position="1076"/>
    </location>
</feature>
<feature type="modified residue" description="Phosphoserine" evidence="2">
    <location>
        <position position="1083"/>
    </location>
</feature>
<feature type="splice variant" id="VSP_032363" description="In isoform 3." evidence="11">
    <original>GCVAAFL</original>
    <variation>VGMSVVS</variation>
    <location>
        <begin position="373"/>
        <end position="379"/>
    </location>
</feature>
<feature type="splice variant" id="VSP_032364" description="In isoform 3." evidence="11">
    <location>
        <begin position="380"/>
        <end position="1458"/>
    </location>
</feature>
<feature type="splice variant" id="VSP_032365" description="In isoform 4." evidence="11">
    <original>I</original>
    <variation>IGQQLAAITAWDSSATNLTAHIPLVTPF</variation>
    <location>
        <position position="480"/>
    </location>
</feature>
<feature type="splice variant" id="VSP_032366" description="In isoform 2, isoform 4 and isoform 5." evidence="9 10 11 12">
    <location>
        <begin position="557"/>
        <end position="577"/>
    </location>
</feature>
<feature type="splice variant" id="VSP_032367" description="In isoform 6." evidence="11">
    <location>
        <position position="1055"/>
    </location>
</feature>
<feature type="splice variant" id="VSP_032368" description="In isoform 5." evidence="9">
    <location>
        <position position="1202"/>
    </location>
</feature>
<feature type="sequence conflict" description="In Ref. 3; BAE29251." evidence="13" ref="3">
    <original>N</original>
    <variation>D</variation>
    <location>
        <position position="581"/>
    </location>
</feature>
<feature type="sequence conflict" description="In Ref. 5; AAH31478." evidence="13" ref="5">
    <original>G</original>
    <variation>E</variation>
    <location>
        <position position="661"/>
    </location>
</feature>
<feature type="sequence conflict" description="In Ref. 3; BAE22277." evidence="13" ref="3">
    <original>Y</original>
    <variation>H</variation>
    <location>
        <position position="893"/>
    </location>
</feature>
<feature type="sequence conflict" description="In Ref. 2; BAC98191." evidence="13" ref="2">
    <original>A</original>
    <variation>V</variation>
    <location>
        <position position="1257"/>
    </location>
</feature>
<accession>Q6PAR5</accession>
<accession>A0PJI8</accession>
<accession>A2AR09</accession>
<accession>A2AR10</accession>
<accession>A2AR17</accession>
<accession>A2AR18</accession>
<accession>Q3TNS1</accession>
<accession>Q3UDL0</accession>
<accession>Q3UYD5</accession>
<accession>Q6ZPP0</accession>
<accession>Q80V37</accession>
<accession>Q80ZK4</accession>
<accession>Q8BTS5</accession>
<accession>Q9CRS2</accession>
<accession>Q9CTI1</accession>
<organism>
    <name type="scientific">Mus musculus</name>
    <name type="common">Mouse</name>
    <dbReference type="NCBI Taxonomy" id="10090"/>
    <lineage>
        <taxon>Eukaryota</taxon>
        <taxon>Metazoa</taxon>
        <taxon>Chordata</taxon>
        <taxon>Craniata</taxon>
        <taxon>Vertebrata</taxon>
        <taxon>Euteleostomi</taxon>
        <taxon>Mammalia</taxon>
        <taxon>Eutheria</taxon>
        <taxon>Euarchontoglires</taxon>
        <taxon>Glires</taxon>
        <taxon>Rodentia</taxon>
        <taxon>Myomorpha</taxon>
        <taxon>Muroidea</taxon>
        <taxon>Muridae</taxon>
        <taxon>Murinae</taxon>
        <taxon>Mus</taxon>
        <taxon>Mus</taxon>
    </lineage>
</organism>
<gene>
    <name type="primary">Gapvd1</name>
    <name type="synonym">Gapex5</name>
    <name type="synonym">Kiaa1521</name>
</gene>
<sequence length="1458" mass="162402">MVKLDIHTLAHHLKQERLYVSSEKQLIQRLNADVLKTAEKLYRTAWIAKQQRINLDRLIITSAEASPAECCQHAKILEDTQFVDGYKQLGFQETAYGEFLSRLRENPRLIASSLVAGEKLNQENTQSVIYTVFTSLYGNCIMQEDESYLLQVLRYLIEFELKESDNPRRLLRRGTCAFSILFKLFSEGLFSAKLFLTATLHEPIMQLLVEDEDHLETDPNKLIERFSPAQQEKLFGEKGSDRFRQKVQEMVDSNEAKLVALVNKFIGYLKQNTYCFPHSLRWIVSQMYKTLSCVDRLEVGEVRAMCTDLLLACFICPAVVNPEQYGIISDAPINEVARFNLMQVGRLLQQLAMTGTEEGDPRTKNSLGKFDKGCVAAFLDVVIGGRAVETPPMSSVNLLEGLSRTVVYISYSQLITLVNFMKSVMSGDQLKEDRMALDNLLANLPQAKPGKSSSLDMTPYSTPQMSPATTPANKKNRLPIATRSRSRSNMLMDLHMDHEGSSQETIQEVQPEEVLVISLGTGPQLTPGMMSENEVLNMQLSDGGQGDVPVDENKLHGKPDKTLRFSLCSDNLEGISEGPSNRSNSVSSLDLEGESVSELGAGPSGSNGVEALQLLEHEQATTQDNLDDKLRKFEIRDMMGLTDDRDISETVSETWSTDVLGSDFDPNVDEDRLQEIAGAAAENVLGSLLCLPGSGSVLLDPCTGSTISETTSEAWSVEVLPSDSEAPDLKQEERLQELESCSGLGSTSDDTDVREVSSRPSTPGLSVVSGISATSEDIPNKIEDLRSECSSDFGGKDSVTSPDMDDIAHGAHQLTSPPSQSESLLAMFDPLSSHEGASAVVRPKVHYARPSHPPPDPPILEGAVGGNEARLPNFGSHVLTAAEMEAFKQRHSYPERLVRSRSSDIVSSVRRPMSDPSWNRRPGNEELPPAAATGATSLVAAPHSSSSSPSKDSSRGETEERKDSDDERSDRSRPWWRKRFVSAMPKAPIPFRKKEKQEKDKDDLGPDRFSTLTDEPSPRLSAQAQVAEDILDKYRNAIKRTSPSEGAMANDESAEVMGDGESAHDSPREEALQNISADDLPDSASQAAHPQDSAFSYRDVKKKLRLALCSADSVAFPVLTHSTRNGLPDHTDPEDNEIVCFLKVQIAEAINLQDKSLMAQLQETMRCVCRFDNRTCRKLLASIAEDYRKRAPYIAYLTRCRQGLQTTQAHLERLLQRVLRDKEVANRYFTTVCVRLLLESKEKKIREFIQDFQKLTAADDKTAQVEDFLQFLYGVMAQDVIWQNASEEQLQDAQLAIERSVMNRIFKLAFYPNQDGDILRDQVLHEHIQRLSKVVTANHRALQIPEVYLREAPWPSAQSEIRTISAYKTPRDKVQCILRMCSTIMNLLSLANEDSVPGADDFVPVLVFVLIKANPPCLLSTVQYISSFYASCLSGEESYWWMQFTAAVEFIKTIDDRK</sequence>
<comment type="function">
    <text evidence="6 7 8">Acts both as a GTPase-activating protein (GAP) and a guanine nucleotide exchange factor (GEF), and participates in various processes such as endocytosis, insulin receptor internalization or LC2A4/GLUT4 trafficking. Acts as a GEF for the Ras-related protein RAB31 by exchanging bound GDP for free GTP, leading to regulate LC2A4/GLUT4 trafficking. In the absence of insulin, it maintains RAB31 in an active state and promotes a futile cycle between LC2A4/GLUT4 storage vesicles and early endosomes, retaining LC2A4/GLUT4 inside the cells. Upon insulin stimulation, it is translocated to the plasma membrane, releasing LC2A4/GLUT4 from intracellular storage vesicles. Also involved in EGFR trafficking and degradation, possibly by promoting EGFR ubiquitination and subsequent degradation by the proteasome. Has GEF activity for Rab5 and GAP activity for Ras.</text>
</comment>
<comment type="subunit">
    <text evidence="1 7">Interacts with RAB5A (By similarity). Interacts with TRIP10/CIP4.</text>
</comment>
<comment type="subcellular location">
    <subcellularLocation>
        <location evidence="7">Membrane</location>
        <topology evidence="7">Peripheral membrane protein</topology>
    </subcellularLocation>
    <subcellularLocation>
        <location evidence="1">Endosome</location>
    </subcellularLocation>
    <text>Recruited to the plasma membrane by TRIP10/CIP4 in response to insulin.</text>
</comment>
<comment type="alternative products">
    <event type="alternative splicing"/>
    <isoform>
        <id>Q6PAR5-1</id>
        <name>1</name>
        <sequence type="displayed"/>
    </isoform>
    <isoform>
        <id>Q6PAR5-2</id>
        <name>2</name>
        <sequence type="described" ref="VSP_032366"/>
    </isoform>
    <isoform>
        <id>Q6PAR5-3</id>
        <name>3</name>
        <sequence type="described" ref="VSP_032363 VSP_032364"/>
    </isoform>
    <isoform>
        <id>Q6PAR5-4</id>
        <name>4</name>
        <sequence type="described" ref="VSP_032365 VSP_032366"/>
    </isoform>
    <isoform>
        <id>Q6PAR5-5</id>
        <name>5</name>
        <sequence type="described" ref="VSP_032366 VSP_032368"/>
    </isoform>
    <isoform>
        <id>Q6PAR5-6</id>
        <name>6</name>
        <sequence type="described" ref="VSP_032367"/>
    </isoform>
</comment>
<comment type="tissue specificity">
    <text evidence="7">Present in adipocytes and fibroblasts (at protein level). Ubiquitously expressed.</text>
</comment>
<comment type="similarity">
    <text evidence="13">Belongs to the GAPVD1 family.</text>
</comment>
<comment type="sequence caution" evidence="13">
    <conflict type="miscellaneous discrepancy">
        <sequence resource="EMBL-CDS" id="AAH31478"/>
    </conflict>
    <text>Contaminating sequence. Potential poly-A sequence.</text>
</comment>
<comment type="sequence caution" evidence="13">
    <conflict type="erroneous initiation">
        <sequence resource="EMBL-CDS" id="AAH43715"/>
    </conflict>
</comment>
<comment type="sequence caution" evidence="13">
    <conflict type="miscellaneous discrepancy">
        <sequence resource="EMBL-CDS" id="AAH48847"/>
    </conflict>
    <text>Contaminating sequence. Potential poly-A sequence.</text>
</comment>
<comment type="sequence caution" evidence="13">
    <conflict type="erroneous initiation">
        <sequence resource="EMBL-CDS" id="AAH57164"/>
    </conflict>
</comment>
<comment type="sequence caution" evidence="13">
    <conflict type="erroneous initiation">
        <sequence resource="EMBL-CDS" id="BAB29377"/>
    </conflict>
</comment>
<comment type="sequence caution" evidence="13">
    <conflict type="erroneous initiation">
        <sequence resource="EMBL-CDS" id="BAC98191"/>
    </conflict>
</comment>
<comment type="sequence caution" evidence="13">
    <conflict type="erroneous initiation">
        <sequence resource="EMBL-CDS" id="BAE22277"/>
    </conflict>
</comment>
<comment type="sequence caution" evidence="13">
    <conflict type="frameshift">
        <sequence resource="EMBL-CDS" id="BAE29251"/>
    </conflict>
</comment>
<comment type="sequence caution" evidence="13">
    <conflict type="erroneous gene model prediction">
        <sequence resource="EMBL-CDS" id="CAM15445"/>
    </conflict>
</comment>
<comment type="sequence caution" evidence="13">
    <conflict type="erroneous gene model prediction">
        <sequence resource="EMBL-CDS" id="CAM15446"/>
    </conflict>
</comment>
<comment type="sequence caution" evidence="13">
    <conflict type="erroneous gene model prediction">
        <sequence resource="EMBL-CDS" id="CAM15455"/>
    </conflict>
</comment>
<comment type="sequence caution" evidence="13">
    <conflict type="erroneous gene model prediction">
        <sequence resource="EMBL-CDS" id="CAM15456"/>
    </conflict>
</comment>
<comment type="sequence caution" evidence="13">
    <conflict type="erroneous gene model prediction">
        <sequence resource="EMBL-CDS" id="CAM24604"/>
    </conflict>
</comment>
<comment type="sequence caution" evidence="13">
    <conflict type="erroneous gene model prediction">
        <sequence resource="EMBL-CDS" id="CAM24605"/>
    </conflict>
</comment>
<protein>
    <recommendedName>
        <fullName>GTPase-activating protein and VPS9 domain-containing protein 1</fullName>
    </recommendedName>
    <alternativeName>
        <fullName>GAPex-5</fullName>
    </alternativeName>
    <alternativeName>
        <fullName>Rab5-activating protein 6</fullName>
    </alternativeName>
</protein>
<evidence type="ECO:0000250" key="1"/>
<evidence type="ECO:0000250" key="2">
    <source>
        <dbReference type="UniProtKB" id="Q14C86"/>
    </source>
</evidence>
<evidence type="ECO:0000255" key="3">
    <source>
        <dbReference type="PROSITE-ProRule" id="PRU00167"/>
    </source>
</evidence>
<evidence type="ECO:0000255" key="4">
    <source>
        <dbReference type="PROSITE-ProRule" id="PRU00550"/>
    </source>
</evidence>
<evidence type="ECO:0000256" key="5">
    <source>
        <dbReference type="SAM" id="MobiDB-lite"/>
    </source>
</evidence>
<evidence type="ECO:0000269" key="6">
    <source>
    </source>
</evidence>
<evidence type="ECO:0000269" key="7">
    <source>
    </source>
</evidence>
<evidence type="ECO:0000269" key="8">
    <source>
    </source>
</evidence>
<evidence type="ECO:0000303" key="9">
    <source>
    </source>
</evidence>
<evidence type="ECO:0000303" key="10">
    <source>
    </source>
</evidence>
<evidence type="ECO:0000303" key="11">
    <source>
    </source>
</evidence>
<evidence type="ECO:0000303" key="12">
    <source>
    </source>
</evidence>
<evidence type="ECO:0000305" key="13"/>
<evidence type="ECO:0007744" key="14">
    <source>
    </source>
</evidence>
<evidence type="ECO:0007744" key="15">
    <source>
    </source>
</evidence>
<evidence type="ECO:0007744" key="16">
    <source>
    </source>
</evidence>
<name>GAPD1_MOUSE</name>
<dbReference type="EMBL" id="EF155419">
    <property type="protein sequence ID" value="ABM68541.1"/>
    <property type="molecule type" value="mRNA"/>
</dbReference>
<dbReference type="EMBL" id="AK129381">
    <property type="protein sequence ID" value="BAC98191.1"/>
    <property type="status" value="ALT_INIT"/>
    <property type="molecule type" value="Transcribed_RNA"/>
</dbReference>
<dbReference type="EMBL" id="AK014474">
    <property type="protein sequence ID" value="BAB29377.2"/>
    <property type="status" value="ALT_INIT"/>
    <property type="molecule type" value="mRNA"/>
</dbReference>
<dbReference type="EMBL" id="AK088851">
    <property type="protein sequence ID" value="BAC40613.1"/>
    <property type="molecule type" value="mRNA"/>
</dbReference>
<dbReference type="EMBL" id="AK003521">
    <property type="protein sequence ID" value="BAB22834.1"/>
    <property type="molecule type" value="mRNA"/>
</dbReference>
<dbReference type="EMBL" id="AK134776">
    <property type="protein sequence ID" value="BAE22277.1"/>
    <property type="status" value="ALT_INIT"/>
    <property type="molecule type" value="mRNA"/>
</dbReference>
<dbReference type="EMBL" id="AK150026">
    <property type="protein sequence ID" value="BAE29251.1"/>
    <property type="status" value="ALT_FRAME"/>
    <property type="molecule type" value="mRNA"/>
</dbReference>
<dbReference type="EMBL" id="AK165047">
    <property type="protein sequence ID" value="BAE38017.1"/>
    <property type="molecule type" value="mRNA"/>
</dbReference>
<dbReference type="EMBL" id="AL845262">
    <property type="protein sequence ID" value="CAM15445.1"/>
    <property type="status" value="ALT_SEQ"/>
    <property type="molecule type" value="Genomic_DNA"/>
</dbReference>
<dbReference type="EMBL" id="AL929106">
    <property type="protein sequence ID" value="CAM15445.1"/>
    <property type="status" value="JOINED"/>
    <property type="molecule type" value="Genomic_DNA"/>
</dbReference>
<dbReference type="EMBL" id="AL845262">
    <property type="protein sequence ID" value="CAM15446.1"/>
    <property type="status" value="ALT_SEQ"/>
    <property type="molecule type" value="Genomic_DNA"/>
</dbReference>
<dbReference type="EMBL" id="AL929106">
    <property type="protein sequence ID" value="CAM15446.1"/>
    <property type="status" value="JOINED"/>
    <property type="molecule type" value="Genomic_DNA"/>
</dbReference>
<dbReference type="EMBL" id="AL845262">
    <property type="protein sequence ID" value="CAM15447.1"/>
    <property type="molecule type" value="Genomic_DNA"/>
</dbReference>
<dbReference type="EMBL" id="AL929106">
    <property type="protein sequence ID" value="CAM15447.1"/>
    <property type="status" value="JOINED"/>
    <property type="molecule type" value="Genomic_DNA"/>
</dbReference>
<dbReference type="EMBL" id="AL845262">
    <property type="protein sequence ID" value="CAM15455.1"/>
    <property type="status" value="ALT_SEQ"/>
    <property type="molecule type" value="Genomic_DNA"/>
</dbReference>
<dbReference type="EMBL" id="AL845262">
    <property type="protein sequence ID" value="CAM15456.1"/>
    <property type="status" value="ALT_SEQ"/>
    <property type="molecule type" value="Genomic_DNA"/>
</dbReference>
<dbReference type="EMBL" id="AL929106">
    <property type="protein sequence ID" value="CAM24604.1"/>
    <property type="status" value="ALT_SEQ"/>
    <property type="molecule type" value="Genomic_DNA"/>
</dbReference>
<dbReference type="EMBL" id="AL845262">
    <property type="protein sequence ID" value="CAM24604.1"/>
    <property type="status" value="JOINED"/>
    <property type="molecule type" value="Genomic_DNA"/>
</dbReference>
<dbReference type="EMBL" id="AL929106">
    <property type="protein sequence ID" value="CAM24605.1"/>
    <property type="status" value="ALT_SEQ"/>
    <property type="molecule type" value="Genomic_DNA"/>
</dbReference>
<dbReference type="EMBL" id="AL845262">
    <property type="protein sequence ID" value="CAM24605.1"/>
    <property type="status" value="JOINED"/>
    <property type="molecule type" value="Genomic_DNA"/>
</dbReference>
<dbReference type="EMBL" id="AL929106">
    <property type="protein sequence ID" value="CAM24606.1"/>
    <property type="molecule type" value="Genomic_DNA"/>
</dbReference>
<dbReference type="EMBL" id="AL845262">
    <property type="protein sequence ID" value="CAM24606.1"/>
    <property type="status" value="JOINED"/>
    <property type="molecule type" value="Genomic_DNA"/>
</dbReference>
<dbReference type="EMBL" id="BC031478">
    <property type="protein sequence ID" value="AAH31478.1"/>
    <property type="status" value="ALT_SEQ"/>
    <property type="molecule type" value="mRNA"/>
</dbReference>
<dbReference type="EMBL" id="BC043715">
    <property type="protein sequence ID" value="AAH43715.1"/>
    <property type="status" value="ALT_INIT"/>
    <property type="molecule type" value="mRNA"/>
</dbReference>
<dbReference type="EMBL" id="BC048847">
    <property type="protein sequence ID" value="AAH48847.1"/>
    <property type="status" value="ALT_SEQ"/>
    <property type="molecule type" value="mRNA"/>
</dbReference>
<dbReference type="EMBL" id="BC057164">
    <property type="protein sequence ID" value="AAH57164.1"/>
    <property type="status" value="ALT_INIT"/>
    <property type="molecule type" value="mRNA"/>
</dbReference>
<dbReference type="EMBL" id="BC060123">
    <property type="protein sequence ID" value="AAH60123.1"/>
    <property type="molecule type" value="mRNA"/>
</dbReference>
<dbReference type="CCDS" id="CCDS15949.1">
    <molecule id="Q6PAR5-2"/>
</dbReference>
<dbReference type="CCDS" id="CCDS89478.1">
    <molecule id="Q6PAR5-1"/>
</dbReference>
<dbReference type="RefSeq" id="NP_001343370.1">
    <molecule id="Q6PAR5-1"/>
    <property type="nucleotide sequence ID" value="NM_001356441.1"/>
</dbReference>
<dbReference type="RefSeq" id="NP_079985.2">
    <molecule id="Q6PAR5-2"/>
    <property type="nucleotide sequence ID" value="NM_025709.2"/>
</dbReference>
<dbReference type="RefSeq" id="XP_011237449.1">
    <property type="nucleotide sequence ID" value="XM_011239147.1"/>
</dbReference>
<dbReference type="RefSeq" id="XP_011237450.1">
    <property type="nucleotide sequence ID" value="XM_011239148.2"/>
</dbReference>
<dbReference type="RefSeq" id="XP_030107814.1">
    <molecule id="Q6PAR5-4"/>
    <property type="nucleotide sequence ID" value="XM_030251954.2"/>
</dbReference>
<dbReference type="RefSeq" id="XP_036018360.1">
    <molecule id="Q6PAR5-1"/>
    <property type="nucleotide sequence ID" value="XM_036162467.1"/>
</dbReference>
<dbReference type="RefSeq" id="XP_036018361.1">
    <molecule id="Q6PAR5-1"/>
    <property type="nucleotide sequence ID" value="XM_036162468.1"/>
</dbReference>
<dbReference type="RefSeq" id="XP_036018362.1">
    <molecule id="Q6PAR5-1"/>
    <property type="nucleotide sequence ID" value="XM_036162469.1"/>
</dbReference>
<dbReference type="RefSeq" id="XP_036018363.1">
    <molecule id="Q6PAR5-2"/>
    <property type="nucleotide sequence ID" value="XM_036162470.1"/>
</dbReference>
<dbReference type="RefSeq" id="XP_036018364.1">
    <molecule id="Q6PAR5-2"/>
    <property type="nucleotide sequence ID" value="XM_036162471.1"/>
</dbReference>
<dbReference type="SMR" id="Q6PAR5"/>
<dbReference type="BioGRID" id="211649">
    <property type="interactions" value="3"/>
</dbReference>
<dbReference type="FunCoup" id="Q6PAR5">
    <property type="interactions" value="5467"/>
</dbReference>
<dbReference type="IntAct" id="Q6PAR5">
    <property type="interactions" value="3"/>
</dbReference>
<dbReference type="MINT" id="Q6PAR5"/>
<dbReference type="STRING" id="10090.ENSMUSP00000099864"/>
<dbReference type="GlyGen" id="Q6PAR5">
    <property type="glycosylation" value="4 sites, 1 O-linked glycan (3 sites)"/>
</dbReference>
<dbReference type="iPTMnet" id="Q6PAR5"/>
<dbReference type="PhosphoSitePlus" id="Q6PAR5"/>
<dbReference type="SwissPalm" id="Q6PAR5"/>
<dbReference type="jPOST" id="Q6PAR5"/>
<dbReference type="PaxDb" id="10090-ENSMUSP00000108723"/>
<dbReference type="PeptideAtlas" id="Q6PAR5"/>
<dbReference type="ProteomicsDB" id="271662">
    <molecule id="Q6PAR5-1"/>
</dbReference>
<dbReference type="ProteomicsDB" id="271663">
    <molecule id="Q6PAR5-2"/>
</dbReference>
<dbReference type="ProteomicsDB" id="271664">
    <molecule id="Q6PAR5-3"/>
</dbReference>
<dbReference type="ProteomicsDB" id="271665">
    <molecule id="Q6PAR5-4"/>
</dbReference>
<dbReference type="ProteomicsDB" id="271666">
    <molecule id="Q6PAR5-5"/>
</dbReference>
<dbReference type="ProteomicsDB" id="271667">
    <molecule id="Q6PAR5-6"/>
</dbReference>
<dbReference type="Pumba" id="Q6PAR5"/>
<dbReference type="Antibodypedia" id="30544">
    <property type="antibodies" value="98 antibodies from 19 providers"/>
</dbReference>
<dbReference type="DNASU" id="66691"/>
<dbReference type="Ensembl" id="ENSMUST00000028224.15">
    <molecule id="Q6PAR5-2"/>
    <property type="protein sequence ID" value="ENSMUSP00000028224.9"/>
    <property type="gene ID" value="ENSMUSG00000026867.20"/>
</dbReference>
<dbReference type="Ensembl" id="ENSMUST00000102800.9">
    <molecule id="Q6PAR5-2"/>
    <property type="protein sequence ID" value="ENSMUSP00000099864.2"/>
    <property type="gene ID" value="ENSMUSG00000026867.20"/>
</dbReference>
<dbReference type="Ensembl" id="ENSMUST00000113099.10">
    <molecule id="Q6PAR5-1"/>
    <property type="protein sequence ID" value="ENSMUSP00000108723.4"/>
    <property type="gene ID" value="ENSMUSG00000026867.20"/>
</dbReference>
<dbReference type="GeneID" id="66691"/>
<dbReference type="KEGG" id="mmu:66691"/>
<dbReference type="UCSC" id="uc008jiq.2">
    <molecule id="Q6PAR5-2"/>
    <property type="organism name" value="mouse"/>
</dbReference>
<dbReference type="UCSC" id="uc008jir.1">
    <molecule id="Q6PAR5-3"/>
    <property type="organism name" value="mouse"/>
</dbReference>
<dbReference type="UCSC" id="uc012bug.1">
    <molecule id="Q6PAR5-4"/>
    <property type="organism name" value="mouse"/>
</dbReference>
<dbReference type="AGR" id="MGI:1913941"/>
<dbReference type="CTD" id="26130"/>
<dbReference type="MGI" id="MGI:1913941">
    <property type="gene designation" value="Gapvd1"/>
</dbReference>
<dbReference type="VEuPathDB" id="HostDB:ENSMUSG00000026867"/>
<dbReference type="eggNOG" id="KOG2319">
    <property type="taxonomic scope" value="Eukaryota"/>
</dbReference>
<dbReference type="GeneTree" id="ENSGT00940000156611"/>
<dbReference type="HOGENOM" id="CLU_002165_1_0_1"/>
<dbReference type="InParanoid" id="Q6PAR5"/>
<dbReference type="OMA" id="ENHEIML"/>
<dbReference type="OrthoDB" id="10264848at2759"/>
<dbReference type="PhylomeDB" id="Q6PAR5"/>
<dbReference type="TreeFam" id="TF105908"/>
<dbReference type="Reactome" id="R-MMU-8856828">
    <property type="pathway name" value="Clathrin-mediated endocytosis"/>
</dbReference>
<dbReference type="Reactome" id="R-MMU-8876198">
    <property type="pathway name" value="RAB GEFs exchange GTP for GDP on RABs"/>
</dbReference>
<dbReference type="BioGRID-ORCS" id="66691">
    <property type="hits" value="2 hits in 78 CRISPR screens"/>
</dbReference>
<dbReference type="ChiTaRS" id="Gapvd1">
    <property type="organism name" value="mouse"/>
</dbReference>
<dbReference type="PRO" id="PR:Q6PAR5"/>
<dbReference type="Proteomes" id="UP000000589">
    <property type="component" value="Chromosome 2"/>
</dbReference>
<dbReference type="RNAct" id="Q6PAR5">
    <property type="molecule type" value="protein"/>
</dbReference>
<dbReference type="Bgee" id="ENSMUSG00000026867">
    <property type="expression patterns" value="Expressed in manus and 231 other cell types or tissues"/>
</dbReference>
<dbReference type="ExpressionAtlas" id="Q6PAR5">
    <property type="expression patterns" value="baseline and differential"/>
</dbReference>
<dbReference type="GO" id="GO:0005829">
    <property type="term" value="C:cytosol"/>
    <property type="evidence" value="ECO:0000314"/>
    <property type="project" value="UniProtKB"/>
</dbReference>
<dbReference type="GO" id="GO:0005768">
    <property type="term" value="C:endosome"/>
    <property type="evidence" value="ECO:0007669"/>
    <property type="project" value="UniProtKB-SubCell"/>
</dbReference>
<dbReference type="GO" id="GO:0005886">
    <property type="term" value="C:plasma membrane"/>
    <property type="evidence" value="ECO:0007669"/>
    <property type="project" value="Ensembl"/>
</dbReference>
<dbReference type="GO" id="GO:0032794">
    <property type="term" value="F:GTPase activating protein binding"/>
    <property type="evidence" value="ECO:0000315"/>
    <property type="project" value="UniProtKB"/>
</dbReference>
<dbReference type="GO" id="GO:0005096">
    <property type="term" value="F:GTPase activator activity"/>
    <property type="evidence" value="ECO:0007669"/>
    <property type="project" value="UniProtKB-KW"/>
</dbReference>
<dbReference type="GO" id="GO:0005085">
    <property type="term" value="F:guanyl-nucleotide exchange factor activity"/>
    <property type="evidence" value="ECO:0000315"/>
    <property type="project" value="UniProtKB"/>
</dbReference>
<dbReference type="GO" id="GO:0006897">
    <property type="term" value="P:endocytosis"/>
    <property type="evidence" value="ECO:0007669"/>
    <property type="project" value="UniProtKB-KW"/>
</dbReference>
<dbReference type="GO" id="GO:0051223">
    <property type="term" value="P:regulation of protein transport"/>
    <property type="evidence" value="ECO:0000315"/>
    <property type="project" value="UniProtKB"/>
</dbReference>
<dbReference type="CDD" id="cd05129">
    <property type="entry name" value="RasGAP_RAP6"/>
    <property type="match status" value="1"/>
</dbReference>
<dbReference type="FunFam" id="1.10.246.120:FF:000001">
    <property type="entry name" value="GTPase-activating protein and VPS9 domain-containing protein 1 isoform X1"/>
    <property type="match status" value="1"/>
</dbReference>
<dbReference type="FunFam" id="1.10.506.10:FF:000009">
    <property type="entry name" value="GTPase-activating protein and VPS9 domain-containing protein 1 isoform X1"/>
    <property type="match status" value="1"/>
</dbReference>
<dbReference type="FunFam" id="1.20.1050.80:FF:000001">
    <property type="entry name" value="GTPase-activating protein and VPS9 domain-containing protein 1 isoform X1"/>
    <property type="match status" value="1"/>
</dbReference>
<dbReference type="Gene3D" id="1.10.246.120">
    <property type="match status" value="1"/>
</dbReference>
<dbReference type="Gene3D" id="1.10.506.10">
    <property type="entry name" value="GTPase Activation - p120gap, domain 1"/>
    <property type="match status" value="1"/>
</dbReference>
<dbReference type="Gene3D" id="1.20.1050.80">
    <property type="entry name" value="VPS9 domain"/>
    <property type="match status" value="1"/>
</dbReference>
<dbReference type="InterPro" id="IPR041545">
    <property type="entry name" value="DUF5601"/>
</dbReference>
<dbReference type="InterPro" id="IPR001936">
    <property type="entry name" value="RasGAP_dom"/>
</dbReference>
<dbReference type="InterPro" id="IPR008936">
    <property type="entry name" value="Rho_GTPase_activation_prot"/>
</dbReference>
<dbReference type="InterPro" id="IPR003123">
    <property type="entry name" value="VPS9"/>
</dbReference>
<dbReference type="InterPro" id="IPR045046">
    <property type="entry name" value="Vps9-like"/>
</dbReference>
<dbReference type="InterPro" id="IPR037191">
    <property type="entry name" value="VPS9_dom_sf"/>
</dbReference>
<dbReference type="PANTHER" id="PTHR23101:SF25">
    <property type="entry name" value="GTPASE-ACTIVATING PROTEIN AND VPS9 DOMAIN-CONTAINING PROTEIN 1"/>
    <property type="match status" value="1"/>
</dbReference>
<dbReference type="PANTHER" id="PTHR23101">
    <property type="entry name" value="RAB GDP/GTP EXCHANGE FACTOR"/>
    <property type="match status" value="1"/>
</dbReference>
<dbReference type="Pfam" id="PF18151">
    <property type="entry name" value="DUF5601"/>
    <property type="match status" value="1"/>
</dbReference>
<dbReference type="Pfam" id="PF00616">
    <property type="entry name" value="RasGAP"/>
    <property type="match status" value="1"/>
</dbReference>
<dbReference type="Pfam" id="PF02204">
    <property type="entry name" value="VPS9"/>
    <property type="match status" value="1"/>
</dbReference>
<dbReference type="SMART" id="SM00167">
    <property type="entry name" value="VPS9"/>
    <property type="match status" value="1"/>
</dbReference>
<dbReference type="SUPFAM" id="SSF48350">
    <property type="entry name" value="GTPase activation domain, GAP"/>
    <property type="match status" value="1"/>
</dbReference>
<dbReference type="SUPFAM" id="SSF109993">
    <property type="entry name" value="VPS9 domain"/>
    <property type="match status" value="1"/>
</dbReference>
<dbReference type="PROSITE" id="PS50018">
    <property type="entry name" value="RAS_GTPASE_ACTIV_2"/>
    <property type="match status" value="1"/>
</dbReference>
<dbReference type="PROSITE" id="PS51205">
    <property type="entry name" value="VPS9"/>
    <property type="match status" value="1"/>
</dbReference>
<reference key="1">
    <citation type="journal article" date="2007" name="Cell Metab.">
        <title>Gapex-5, a Rab31 guanine nucleotide exchange factor that regulates Glut4 trafficking in adipocytes.</title>
        <authorList>
            <person name="Lodhi I.J."/>
            <person name="Chiang S.-H."/>
            <person name="Chang L."/>
            <person name="Vollenweider D."/>
            <person name="Watson R.T."/>
            <person name="Inoue M."/>
            <person name="Pessin J.E."/>
            <person name="Saltiel A.R."/>
        </authorList>
    </citation>
    <scope>NUCLEOTIDE SEQUENCE [MRNA] (ISOFORM 2)</scope>
    <scope>FUNCTION</scope>
    <scope>SUBCELLULAR LOCATION</scope>
    <scope>TISSUE SPECIFICITY</scope>
    <scope>INTERACTION WITH TRIP10</scope>
    <source>
        <strain>Swiss albino</strain>
    </source>
</reference>
<reference key="2">
    <citation type="journal article" date="2003" name="DNA Res.">
        <title>Prediction of the coding sequences of mouse homologues of KIAA gene: III. The complete nucleotide sequences of 500 mouse KIAA-homologous cDNAs identified by screening of terminal sequences of cDNA clones randomly sampled from size-fractionated libraries.</title>
        <authorList>
            <person name="Okazaki N."/>
            <person name="Kikuno R."/>
            <person name="Ohara R."/>
            <person name="Inamoto S."/>
            <person name="Koseki H."/>
            <person name="Hiraoka S."/>
            <person name="Saga Y."/>
            <person name="Nagase T."/>
            <person name="Ohara O."/>
            <person name="Koga H."/>
        </authorList>
    </citation>
    <scope>NUCLEOTIDE SEQUENCE [LARGE SCALE MRNA] (ISOFORM 5)</scope>
</reference>
<reference key="3">
    <citation type="journal article" date="2005" name="Science">
        <title>The transcriptional landscape of the mammalian genome.</title>
        <authorList>
            <person name="Carninci P."/>
            <person name="Kasukawa T."/>
            <person name="Katayama S."/>
            <person name="Gough J."/>
            <person name="Frith M.C."/>
            <person name="Maeda N."/>
            <person name="Oyama R."/>
            <person name="Ravasi T."/>
            <person name="Lenhard B."/>
            <person name="Wells C."/>
            <person name="Kodzius R."/>
            <person name="Shimokawa K."/>
            <person name="Bajic V.B."/>
            <person name="Brenner S.E."/>
            <person name="Batalov S."/>
            <person name="Forrest A.R."/>
            <person name="Zavolan M."/>
            <person name="Davis M.J."/>
            <person name="Wilming L.G."/>
            <person name="Aidinis V."/>
            <person name="Allen J.E."/>
            <person name="Ambesi-Impiombato A."/>
            <person name="Apweiler R."/>
            <person name="Aturaliya R.N."/>
            <person name="Bailey T.L."/>
            <person name="Bansal M."/>
            <person name="Baxter L."/>
            <person name="Beisel K.W."/>
            <person name="Bersano T."/>
            <person name="Bono H."/>
            <person name="Chalk A.M."/>
            <person name="Chiu K.P."/>
            <person name="Choudhary V."/>
            <person name="Christoffels A."/>
            <person name="Clutterbuck D.R."/>
            <person name="Crowe M.L."/>
            <person name="Dalla E."/>
            <person name="Dalrymple B.P."/>
            <person name="de Bono B."/>
            <person name="Della Gatta G."/>
            <person name="di Bernardo D."/>
            <person name="Down T."/>
            <person name="Engstrom P."/>
            <person name="Fagiolini M."/>
            <person name="Faulkner G."/>
            <person name="Fletcher C.F."/>
            <person name="Fukushima T."/>
            <person name="Furuno M."/>
            <person name="Futaki S."/>
            <person name="Gariboldi M."/>
            <person name="Georgii-Hemming P."/>
            <person name="Gingeras T.R."/>
            <person name="Gojobori T."/>
            <person name="Green R.E."/>
            <person name="Gustincich S."/>
            <person name="Harbers M."/>
            <person name="Hayashi Y."/>
            <person name="Hensch T.K."/>
            <person name="Hirokawa N."/>
            <person name="Hill D."/>
            <person name="Huminiecki L."/>
            <person name="Iacono M."/>
            <person name="Ikeo K."/>
            <person name="Iwama A."/>
            <person name="Ishikawa T."/>
            <person name="Jakt M."/>
            <person name="Kanapin A."/>
            <person name="Katoh M."/>
            <person name="Kawasawa Y."/>
            <person name="Kelso J."/>
            <person name="Kitamura H."/>
            <person name="Kitano H."/>
            <person name="Kollias G."/>
            <person name="Krishnan S.P."/>
            <person name="Kruger A."/>
            <person name="Kummerfeld S.K."/>
            <person name="Kurochkin I.V."/>
            <person name="Lareau L.F."/>
            <person name="Lazarevic D."/>
            <person name="Lipovich L."/>
            <person name="Liu J."/>
            <person name="Liuni S."/>
            <person name="McWilliam S."/>
            <person name="Madan Babu M."/>
            <person name="Madera M."/>
            <person name="Marchionni L."/>
            <person name="Matsuda H."/>
            <person name="Matsuzawa S."/>
            <person name="Miki H."/>
            <person name="Mignone F."/>
            <person name="Miyake S."/>
            <person name="Morris K."/>
            <person name="Mottagui-Tabar S."/>
            <person name="Mulder N."/>
            <person name="Nakano N."/>
            <person name="Nakauchi H."/>
            <person name="Ng P."/>
            <person name="Nilsson R."/>
            <person name="Nishiguchi S."/>
            <person name="Nishikawa S."/>
            <person name="Nori F."/>
            <person name="Ohara O."/>
            <person name="Okazaki Y."/>
            <person name="Orlando V."/>
            <person name="Pang K.C."/>
            <person name="Pavan W.J."/>
            <person name="Pavesi G."/>
            <person name="Pesole G."/>
            <person name="Petrovsky N."/>
            <person name="Piazza S."/>
            <person name="Reed J."/>
            <person name="Reid J.F."/>
            <person name="Ring B.Z."/>
            <person name="Ringwald M."/>
            <person name="Rost B."/>
            <person name="Ruan Y."/>
            <person name="Salzberg S.L."/>
            <person name="Sandelin A."/>
            <person name="Schneider C."/>
            <person name="Schoenbach C."/>
            <person name="Sekiguchi K."/>
            <person name="Semple C.A."/>
            <person name="Seno S."/>
            <person name="Sessa L."/>
            <person name="Sheng Y."/>
            <person name="Shibata Y."/>
            <person name="Shimada H."/>
            <person name="Shimada K."/>
            <person name="Silva D."/>
            <person name="Sinclair B."/>
            <person name="Sperling S."/>
            <person name="Stupka E."/>
            <person name="Sugiura K."/>
            <person name="Sultana R."/>
            <person name="Takenaka Y."/>
            <person name="Taki K."/>
            <person name="Tammoja K."/>
            <person name="Tan S.L."/>
            <person name="Tang S."/>
            <person name="Taylor M.S."/>
            <person name="Tegner J."/>
            <person name="Teichmann S.A."/>
            <person name="Ueda H.R."/>
            <person name="van Nimwegen E."/>
            <person name="Verardo R."/>
            <person name="Wei C.L."/>
            <person name="Yagi K."/>
            <person name="Yamanishi H."/>
            <person name="Zabarovsky E."/>
            <person name="Zhu S."/>
            <person name="Zimmer A."/>
            <person name="Hide W."/>
            <person name="Bult C."/>
            <person name="Grimmond S.M."/>
            <person name="Teasdale R.D."/>
            <person name="Liu E.T."/>
            <person name="Brusic V."/>
            <person name="Quackenbush J."/>
            <person name="Wahlestedt C."/>
            <person name="Mattick J.S."/>
            <person name="Hume D.A."/>
            <person name="Kai C."/>
            <person name="Sasaki D."/>
            <person name="Tomaru Y."/>
            <person name="Fukuda S."/>
            <person name="Kanamori-Katayama M."/>
            <person name="Suzuki M."/>
            <person name="Aoki J."/>
            <person name="Arakawa T."/>
            <person name="Iida J."/>
            <person name="Imamura K."/>
            <person name="Itoh M."/>
            <person name="Kato T."/>
            <person name="Kawaji H."/>
            <person name="Kawagashira N."/>
            <person name="Kawashima T."/>
            <person name="Kojima M."/>
            <person name="Kondo S."/>
            <person name="Konno H."/>
            <person name="Nakano K."/>
            <person name="Ninomiya N."/>
            <person name="Nishio T."/>
            <person name="Okada M."/>
            <person name="Plessy C."/>
            <person name="Shibata K."/>
            <person name="Shiraki T."/>
            <person name="Suzuki S."/>
            <person name="Tagami M."/>
            <person name="Waki K."/>
            <person name="Watahiki A."/>
            <person name="Okamura-Oho Y."/>
            <person name="Suzuki H."/>
            <person name="Kawai J."/>
            <person name="Hayashizaki Y."/>
        </authorList>
    </citation>
    <scope>NUCLEOTIDE SEQUENCE [LARGE SCALE MRNA] (ISOFORMS 3 AND 4)</scope>
    <scope>NUCLEOTIDE SEQUENCE [LARGE SCALE MRNA] OF 973-1458 (ISOFORM 6)</scope>
    <source>
        <strain>C57BL/6J</strain>
        <strain>NOD</strain>
        <tissue>Eye</tissue>
        <tissue>Liver</tissue>
        <tissue>Medulla oblongata</tissue>
        <tissue>Thymus</tissue>
    </source>
</reference>
<reference key="4">
    <citation type="journal article" date="2009" name="PLoS Biol.">
        <title>Lineage-specific biology revealed by a finished genome assembly of the mouse.</title>
        <authorList>
            <person name="Church D.M."/>
            <person name="Goodstadt L."/>
            <person name="Hillier L.W."/>
            <person name="Zody M.C."/>
            <person name="Goldstein S."/>
            <person name="She X."/>
            <person name="Bult C.J."/>
            <person name="Agarwala R."/>
            <person name="Cherry J.L."/>
            <person name="DiCuccio M."/>
            <person name="Hlavina W."/>
            <person name="Kapustin Y."/>
            <person name="Meric P."/>
            <person name="Maglott D."/>
            <person name="Birtle Z."/>
            <person name="Marques A.C."/>
            <person name="Graves T."/>
            <person name="Zhou S."/>
            <person name="Teague B."/>
            <person name="Potamousis K."/>
            <person name="Churas C."/>
            <person name="Place M."/>
            <person name="Herschleb J."/>
            <person name="Runnheim R."/>
            <person name="Forrest D."/>
            <person name="Amos-Landgraf J."/>
            <person name="Schwartz D.C."/>
            <person name="Cheng Z."/>
            <person name="Lindblad-Toh K."/>
            <person name="Eichler E.E."/>
            <person name="Ponting C.P."/>
        </authorList>
    </citation>
    <scope>NUCLEOTIDE SEQUENCE [LARGE SCALE GENOMIC DNA]</scope>
    <source>
        <strain>C57BL/6J</strain>
    </source>
</reference>
<reference key="5">
    <citation type="journal article" date="2004" name="Genome Res.">
        <title>The status, quality, and expansion of the NIH full-length cDNA project: the Mammalian Gene Collection (MGC).</title>
        <authorList>
            <consortium name="The MGC Project Team"/>
        </authorList>
    </citation>
    <scope>NUCLEOTIDE SEQUENCE [LARGE SCALE MRNA] (ISOFORM 2)</scope>
    <source>
        <strain>C57BL/6J</strain>
        <strain>FVB/N</strain>
        <strain>FVB/N-3</strain>
        <tissue>Brain</tissue>
        <tissue>Kidney</tissue>
        <tissue>Mammary tumor</tissue>
    </source>
</reference>
<reference key="6">
    <citation type="journal article" date="2006" name="J. Biol. Chem.">
        <title>Insulin-stimulated Interaction between insulin receptor substrate 1 and p85alpha and activation of protein kinase B/Akt require Rab5.</title>
        <authorList>
            <person name="Su X."/>
            <person name="Lodhi I.J."/>
            <person name="Saltiel A.R."/>
            <person name="Stahl P.D."/>
        </authorList>
    </citation>
    <scope>FUNCTION</scope>
</reference>
<reference key="7">
    <citation type="journal article" date="2007" name="J. Biol. Chem.">
        <title>GAPex-5 mediates ubiquitination, trafficking, and degradation of epidermal growth factor receptor.</title>
        <authorList>
            <person name="Su X."/>
            <person name="Kong C."/>
            <person name="Stahl P.D."/>
        </authorList>
    </citation>
    <scope>FUNCTION</scope>
</reference>
<reference key="8">
    <citation type="journal article" date="2007" name="Proc. Natl. Acad. Sci. U.S.A.">
        <title>Large-scale phosphorylation analysis of mouse liver.</title>
        <authorList>
            <person name="Villen J."/>
            <person name="Beausoleil S.A."/>
            <person name="Gerber S.A."/>
            <person name="Gygi S.P."/>
        </authorList>
    </citation>
    <scope>IDENTIFICATION BY MASS SPECTROMETRY [LARGE SCALE ANALYSIS]</scope>
    <source>
        <tissue>Liver</tissue>
    </source>
</reference>
<reference key="9">
    <citation type="journal article" date="2009" name="Immunity">
        <title>The phagosomal proteome in interferon-gamma-activated macrophages.</title>
        <authorList>
            <person name="Trost M."/>
            <person name="English L."/>
            <person name="Lemieux S."/>
            <person name="Courcelles M."/>
            <person name="Desjardins M."/>
            <person name="Thibault P."/>
        </authorList>
    </citation>
    <scope>PHOSPHORYLATION [LARGE SCALE ANALYSIS] AT SER-902</scope>
    <scope>IDENTIFICATION BY MASS SPECTROMETRY [LARGE SCALE ANALYSIS]</scope>
</reference>
<reference key="10">
    <citation type="journal article" date="2009" name="Mol. Cell. Proteomics">
        <title>Large scale localization of protein phosphorylation by use of electron capture dissociation mass spectrometry.</title>
        <authorList>
            <person name="Sweet S.M."/>
            <person name="Bailey C.M."/>
            <person name="Cunningham D.L."/>
            <person name="Heath J.K."/>
            <person name="Cooper H.J."/>
        </authorList>
    </citation>
    <scope>PHOSPHORYLATION [LARGE SCALE ANALYSIS] AT SER-902</scope>
    <scope>IDENTIFICATION BY MASS SPECTROMETRY [LARGE SCALE ANALYSIS]</scope>
    <source>
        <tissue>Embryonic fibroblast</tissue>
    </source>
</reference>
<reference key="11">
    <citation type="journal article" date="2010" name="Cell">
        <title>A tissue-specific atlas of mouse protein phosphorylation and expression.</title>
        <authorList>
            <person name="Huttlin E.L."/>
            <person name="Jedrychowski M.P."/>
            <person name="Elias J.E."/>
            <person name="Goswami T."/>
            <person name="Rad R."/>
            <person name="Beausoleil S.A."/>
            <person name="Villen J."/>
            <person name="Haas W."/>
            <person name="Sowa M.E."/>
            <person name="Gygi S.P."/>
        </authorList>
    </citation>
    <scope>PHOSPHORYLATION [LARGE SCALE ANALYSIS] AT SER-566; SER-569; SER-742; SER-757; SER-902; SER-908 AND SER-1044</scope>
    <scope>IDENTIFICATION BY MASS SPECTROMETRY [LARGE SCALE ANALYSIS]</scope>
    <source>
        <tissue>Brain</tissue>
        <tissue>Brown adipose tissue</tissue>
        <tissue>Heart</tissue>
        <tissue>Kidney</tissue>
        <tissue>Liver</tissue>
        <tissue>Lung</tissue>
        <tissue>Pancreas</tissue>
        <tissue>Spleen</tissue>
        <tissue>Testis</tissue>
    </source>
</reference>
<proteinExistence type="evidence at protein level"/>
<keyword id="KW-0025">Alternative splicing</keyword>
<keyword id="KW-0254">Endocytosis</keyword>
<keyword id="KW-0967">Endosome</keyword>
<keyword id="KW-0343">GTPase activation</keyword>
<keyword id="KW-0344">Guanine-nucleotide releasing factor</keyword>
<keyword id="KW-0472">Membrane</keyword>
<keyword id="KW-0597">Phosphoprotein</keyword>
<keyword id="KW-1185">Reference proteome</keyword>